<feature type="chain" id="PRO_0000121923" description="tRNA pseudouridine synthase B">
    <location>
        <begin position="1"/>
        <end position="299"/>
    </location>
</feature>
<feature type="domain" description="PUA" evidence="1">
    <location>
        <begin position="241"/>
        <end position="299"/>
    </location>
</feature>
<feature type="active site" description="Nucleophile" evidence="1">
    <location>
        <position position="49"/>
    </location>
</feature>
<gene>
    <name evidence="1" type="primary">truB</name>
    <name type="ordered locus">STH1525</name>
</gene>
<protein>
    <recommendedName>
        <fullName evidence="1">tRNA pseudouridine synthase B</fullName>
        <ecNumber evidence="1">5.4.99.25</ecNumber>
    </recommendedName>
    <alternativeName>
        <fullName evidence="1">tRNA pseudouridine(55) synthase</fullName>
        <shortName evidence="1">Psi55 synthase</shortName>
    </alternativeName>
    <alternativeName>
        <fullName evidence="1">tRNA pseudouridylate synthase</fullName>
    </alternativeName>
    <alternativeName>
        <fullName evidence="1">tRNA-uridine isomerase</fullName>
    </alternativeName>
</protein>
<organism>
    <name type="scientific">Symbiobacterium thermophilum (strain DSM 24528 / JCM 14929 / IAM 14863 / T)</name>
    <dbReference type="NCBI Taxonomy" id="292459"/>
    <lineage>
        <taxon>Bacteria</taxon>
        <taxon>Bacillati</taxon>
        <taxon>Bacillota</taxon>
        <taxon>Clostridia</taxon>
        <taxon>Eubacteriales</taxon>
        <taxon>Symbiobacteriaceae</taxon>
        <taxon>Symbiobacterium</taxon>
    </lineage>
</organism>
<name>TRUB_SYMTH</name>
<evidence type="ECO:0000255" key="1">
    <source>
        <dbReference type="HAMAP-Rule" id="MF_01080"/>
    </source>
</evidence>
<sequence>MARAQNEAASEVDGVLNLLKPPGMTSHDVVAFVRRALGVKKAGHTGTLDPGVAGVLPVCVGRATRLAEYIAGSDKAYRAEITFGVATDTQDGFGEVVAEADASHLTRGDVAYALTRFHGPIEQVPPMVSAVKVGGKRLYELARKGVEVEREPRRVFIHRLQLLDFRPGPRPVAYIDVVCSKGTYVRTLAHDLGRFLQVGAHLSYLVRTRSGPFVLAQAATLEELAAGKARLLPPAAALGDMPRVTVSGRAAARVLHGVAPAVRVEHPDGTTVAVVAANGALLALAEADGGGLRLRKVFG</sequence>
<comment type="function">
    <text evidence="1">Responsible for synthesis of pseudouridine from uracil-55 in the psi GC loop of transfer RNAs.</text>
</comment>
<comment type="catalytic activity">
    <reaction evidence="1">
        <text>uridine(55) in tRNA = pseudouridine(55) in tRNA</text>
        <dbReference type="Rhea" id="RHEA:42532"/>
        <dbReference type="Rhea" id="RHEA-COMP:10101"/>
        <dbReference type="Rhea" id="RHEA-COMP:10102"/>
        <dbReference type="ChEBI" id="CHEBI:65314"/>
        <dbReference type="ChEBI" id="CHEBI:65315"/>
        <dbReference type="EC" id="5.4.99.25"/>
    </reaction>
</comment>
<comment type="similarity">
    <text evidence="1">Belongs to the pseudouridine synthase TruB family. Type 1 subfamily.</text>
</comment>
<accession>Q67P83</accession>
<reference key="1">
    <citation type="journal article" date="2004" name="Nucleic Acids Res.">
        <title>Genome sequence of Symbiobacterium thermophilum, an uncultivable bacterium that depends on microbial commensalism.</title>
        <authorList>
            <person name="Ueda K."/>
            <person name="Yamashita A."/>
            <person name="Ishikawa J."/>
            <person name="Shimada M."/>
            <person name="Watsuji T."/>
            <person name="Morimura K."/>
            <person name="Ikeda H."/>
            <person name="Hattori M."/>
            <person name="Beppu T."/>
        </authorList>
    </citation>
    <scope>NUCLEOTIDE SEQUENCE [LARGE SCALE GENOMIC DNA]</scope>
    <source>
        <strain>DSM 24528 / JCM 14929 / IAM 14863 / T</strain>
    </source>
</reference>
<keyword id="KW-0413">Isomerase</keyword>
<keyword id="KW-1185">Reference proteome</keyword>
<keyword id="KW-0819">tRNA processing</keyword>
<proteinExistence type="inferred from homology"/>
<dbReference type="EC" id="5.4.99.25" evidence="1"/>
<dbReference type="EMBL" id="AP006840">
    <property type="protein sequence ID" value="BAD40510.1"/>
    <property type="molecule type" value="Genomic_DNA"/>
</dbReference>
<dbReference type="RefSeq" id="WP_011195655.1">
    <property type="nucleotide sequence ID" value="NC_006177.1"/>
</dbReference>
<dbReference type="SMR" id="Q67P83"/>
<dbReference type="STRING" id="292459.STH1525"/>
<dbReference type="KEGG" id="sth:STH1525"/>
<dbReference type="eggNOG" id="COG0130">
    <property type="taxonomic scope" value="Bacteria"/>
</dbReference>
<dbReference type="HOGENOM" id="CLU_032087_0_1_9"/>
<dbReference type="OrthoDB" id="9802309at2"/>
<dbReference type="Proteomes" id="UP000000417">
    <property type="component" value="Chromosome"/>
</dbReference>
<dbReference type="GO" id="GO:0003723">
    <property type="term" value="F:RNA binding"/>
    <property type="evidence" value="ECO:0007669"/>
    <property type="project" value="InterPro"/>
</dbReference>
<dbReference type="GO" id="GO:0160148">
    <property type="term" value="F:tRNA pseudouridine(55) synthase activity"/>
    <property type="evidence" value="ECO:0007669"/>
    <property type="project" value="UniProtKB-EC"/>
</dbReference>
<dbReference type="GO" id="GO:1990481">
    <property type="term" value="P:mRNA pseudouridine synthesis"/>
    <property type="evidence" value="ECO:0007669"/>
    <property type="project" value="TreeGrafter"/>
</dbReference>
<dbReference type="GO" id="GO:0031119">
    <property type="term" value="P:tRNA pseudouridine synthesis"/>
    <property type="evidence" value="ECO:0007669"/>
    <property type="project" value="UniProtKB-UniRule"/>
</dbReference>
<dbReference type="CDD" id="cd02573">
    <property type="entry name" value="PseudoU_synth_EcTruB"/>
    <property type="match status" value="1"/>
</dbReference>
<dbReference type="FunFam" id="3.30.2350.10:FF:000011">
    <property type="entry name" value="tRNA pseudouridine synthase B"/>
    <property type="match status" value="1"/>
</dbReference>
<dbReference type="Gene3D" id="3.30.2350.10">
    <property type="entry name" value="Pseudouridine synthase"/>
    <property type="match status" value="1"/>
</dbReference>
<dbReference type="HAMAP" id="MF_01080">
    <property type="entry name" value="TruB_bact"/>
    <property type="match status" value="1"/>
</dbReference>
<dbReference type="InterPro" id="IPR020103">
    <property type="entry name" value="PsdUridine_synth_cat_dom_sf"/>
</dbReference>
<dbReference type="InterPro" id="IPR002501">
    <property type="entry name" value="PsdUridine_synth_N"/>
</dbReference>
<dbReference type="InterPro" id="IPR014780">
    <property type="entry name" value="tRNA_psdUridine_synth_TruB"/>
</dbReference>
<dbReference type="InterPro" id="IPR032819">
    <property type="entry name" value="TruB_C"/>
</dbReference>
<dbReference type="NCBIfam" id="TIGR00431">
    <property type="entry name" value="TruB"/>
    <property type="match status" value="1"/>
</dbReference>
<dbReference type="PANTHER" id="PTHR13767:SF2">
    <property type="entry name" value="PSEUDOURIDYLATE SYNTHASE TRUB1"/>
    <property type="match status" value="1"/>
</dbReference>
<dbReference type="PANTHER" id="PTHR13767">
    <property type="entry name" value="TRNA-PSEUDOURIDINE SYNTHASE"/>
    <property type="match status" value="1"/>
</dbReference>
<dbReference type="Pfam" id="PF16198">
    <property type="entry name" value="TruB_C_2"/>
    <property type="match status" value="1"/>
</dbReference>
<dbReference type="Pfam" id="PF01509">
    <property type="entry name" value="TruB_N"/>
    <property type="match status" value="1"/>
</dbReference>
<dbReference type="SUPFAM" id="SSF55120">
    <property type="entry name" value="Pseudouridine synthase"/>
    <property type="match status" value="1"/>
</dbReference>